<gene>
    <name type="primary">NS</name>
</gene>
<comment type="function">
    <text evidence="1">Suppresses the RNA silencing-based antiviral response in Drosophila cells.</text>
</comment>
<comment type="subcellular location">
    <subcellularLocation>
        <location evidence="1">Host cytoplasm</location>
    </subcellularLocation>
    <subcellularLocation>
        <location evidence="1">Host nucleus</location>
    </subcellularLocation>
</comment>
<comment type="alternative products">
    <event type="alternative splicing"/>
    <isoform>
        <id>P0C138-1</id>
        <name>NS1</name>
        <sequence type="displayed"/>
    </isoform>
    <isoform>
        <id>P0C139-1</id>
        <name>NEP</name>
        <name>NS2</name>
        <sequence type="external"/>
    </isoform>
</comment>
<comment type="sequence caution" evidence="2">
    <conflict type="frameshift">
        <sequence resource="EMBL-CDS" id="BAA24048"/>
    </conflict>
</comment>
<reference key="1">
    <citation type="journal article" date="1986" name="Virology">
        <title>Epidemiology of influenza C virus in man: multiple evolutionary lineages and low rate of change.</title>
        <authorList>
            <person name="Buonagurio D.A."/>
            <person name="Nakada S."/>
            <person name="Fitch W.M."/>
            <person name="Palese P."/>
        </authorList>
    </citation>
    <scope>NUCLEOTIDE SEQUENCE [GENOMIC RNA]</scope>
</reference>
<keyword id="KW-0025">Alternative splicing</keyword>
<keyword id="KW-1035">Host cytoplasm</keyword>
<keyword id="KW-1048">Host nucleus</keyword>
<name>NS1_INCTA</name>
<evidence type="ECO:0000250" key="1"/>
<evidence type="ECO:0000305" key="2"/>
<accession>P0C138</accession>
<accession>P06823</accession>
<dbReference type="EMBL" id="D00028">
    <property type="protein sequence ID" value="BAA24048.1"/>
    <property type="status" value="ALT_FRAME"/>
    <property type="molecule type" value="Genomic_RNA"/>
</dbReference>
<dbReference type="GO" id="GO:0030430">
    <property type="term" value="C:host cell cytoplasm"/>
    <property type="evidence" value="ECO:0007669"/>
    <property type="project" value="UniProtKB-SubCell"/>
</dbReference>
<dbReference type="GO" id="GO:0042025">
    <property type="term" value="C:host cell nucleus"/>
    <property type="evidence" value="ECO:0007669"/>
    <property type="project" value="UniProtKB-SubCell"/>
</dbReference>
<dbReference type="InterPro" id="IPR005187">
    <property type="entry name" value="Flu_C_NS1"/>
</dbReference>
<dbReference type="InterPro" id="IPR005188">
    <property type="entry name" value="Flu_C_NS2"/>
</dbReference>
<dbReference type="Pfam" id="PF03506">
    <property type="entry name" value="Flu_C_NS1"/>
    <property type="match status" value="1"/>
</dbReference>
<dbReference type="Pfam" id="PF03555">
    <property type="entry name" value="Flu_C_NS2"/>
    <property type="match status" value="1"/>
</dbReference>
<organism>
    <name type="scientific">Influenza C virus (strain C/Taylor/1233/1947)</name>
    <dbReference type="NCBI Taxonomy" id="11567"/>
    <lineage>
        <taxon>Viruses</taxon>
        <taxon>Riboviria</taxon>
        <taxon>Orthornavirae</taxon>
        <taxon>Negarnaviricota</taxon>
        <taxon>Polyploviricotina</taxon>
        <taxon>Insthoviricetes</taxon>
        <taxon>Articulavirales</taxon>
        <taxon>Orthomyxoviridae</taxon>
        <taxon>Gammainfluenzavirus</taxon>
        <taxon>Gammainfluenzavirus influenzae</taxon>
        <taxon>Influenza C virus</taxon>
    </lineage>
</organism>
<proteinExistence type="inferred from homology"/>
<sequence length="241" mass="27160">VKSTNLMAFVATKMLERQEDLDTCTEMQVEKMKTSTKARLRTESSFAPRTWEDAIKDGELLFNGTILQAESPTMTPASVEMKGKKFPIDFAPSNIAPIGQNPIYLSPCIPNFDGNVWEATMYHHRGATLTKTMNCNCFQRTIWCHPNPSRMRLSYAFVLYCRNTKKICGYLIARQVAGIETGIRKCFRCIKSGFVMATDEISLTILQSIKSGAQLDPYWGNETPDIDKTEAYMLSLREAGP</sequence>
<feature type="chain" id="PRO_0000223625" description="Non-structural protein 1">
    <location>
        <begin position="1"/>
        <end position="241"/>
    </location>
</feature>
<feature type="non-terminal residue">
    <location>
        <position position="1"/>
    </location>
</feature>
<protein>
    <recommendedName>
        <fullName>Non-structural protein 1</fullName>
        <shortName>NS1</shortName>
    </recommendedName>
    <alternativeName>
        <fullName>NS1C</fullName>
    </alternativeName>
</protein>
<organismHost>
    <name type="scientific">Homo sapiens</name>
    <name type="common">Human</name>
    <dbReference type="NCBI Taxonomy" id="9606"/>
</organismHost>
<organismHost>
    <name type="scientific">Sus scrofa</name>
    <name type="common">Pig</name>
    <dbReference type="NCBI Taxonomy" id="9823"/>
</organismHost>